<reference key="1">
    <citation type="journal article" date="2006" name="Insect Biochem. Mol. Biol.">
        <title>An annotated catalog of salivary gland transcripts from Ixodes scapularis ticks.</title>
        <authorList>
            <person name="Ribeiro J.M.C."/>
            <person name="Alarcon-Chaidez F."/>
            <person name="Francischetti I.M.B."/>
            <person name="Mans B.J."/>
            <person name="Mather T.N."/>
            <person name="Valenzuela J.G."/>
            <person name="Wikel S.K."/>
        </authorList>
    </citation>
    <scope>NUCLEOTIDE SEQUENCE [LARGE SCALE MRNA]</scope>
    <source>
        <strain>Is-all-378</strain>
        <tissue>Salivary gland</tissue>
    </source>
</reference>
<comment type="subunit">
    <text evidence="1">Component of the small ribosomal subunit. Mature ribosomes consist of a small (40S) and a large (60S) subunit. The 40S subunit contains about 33 different proteins and 1 molecule of RNA (18S). The 60S subunit contains about 49 different proteins and 3 molecules of RNA (28S, 5.8S and 5S).</text>
</comment>
<comment type="subcellular location">
    <subcellularLocation>
        <location evidence="1">Cytoplasm</location>
    </subcellularLocation>
</comment>
<comment type="similarity">
    <text evidence="1">Belongs to the eukaryotic ribosomal protein eS1 family.</text>
</comment>
<protein>
    <recommendedName>
        <fullName evidence="1">Small ribosomal subunit protein eS1</fullName>
    </recommendedName>
    <alternativeName>
        <fullName evidence="3">40S ribosomal protein S3a</fullName>
    </alternativeName>
</protein>
<accession>Q4PM31</accession>
<dbReference type="EMBL" id="DQ066297">
    <property type="protein sequence ID" value="AAY66934.1"/>
    <property type="molecule type" value="mRNA"/>
</dbReference>
<dbReference type="RefSeq" id="XP_029835022.1">
    <property type="nucleotide sequence ID" value="XM_029979162.3"/>
</dbReference>
<dbReference type="SMR" id="Q4PM31"/>
<dbReference type="FunCoup" id="Q4PM31">
    <property type="interactions" value="747"/>
</dbReference>
<dbReference type="EnsemblMetazoa" id="XM_029979162.3">
    <property type="protein sequence ID" value="XP_029835022.1"/>
    <property type="gene ID" value="LOC8030792"/>
</dbReference>
<dbReference type="GeneID" id="8030792"/>
<dbReference type="VEuPathDB" id="VectorBase:ISCI008069"/>
<dbReference type="VEuPathDB" id="VectorBase:ISCP_004795"/>
<dbReference type="VEuPathDB" id="VectorBase:ISCW008069"/>
<dbReference type="InParanoid" id="Q4PM31"/>
<dbReference type="OMA" id="MCEIITR"/>
<dbReference type="OrthoDB" id="9834376at2759"/>
<dbReference type="Proteomes" id="UP000001555">
    <property type="component" value="Unplaced"/>
</dbReference>
<dbReference type="GO" id="GO:0005829">
    <property type="term" value="C:cytosol"/>
    <property type="evidence" value="ECO:0000318"/>
    <property type="project" value="GO_Central"/>
</dbReference>
<dbReference type="GO" id="GO:0022627">
    <property type="term" value="C:cytosolic small ribosomal subunit"/>
    <property type="evidence" value="ECO:0007669"/>
    <property type="project" value="UniProtKB-UniRule"/>
</dbReference>
<dbReference type="GO" id="GO:0003735">
    <property type="term" value="F:structural constituent of ribosome"/>
    <property type="evidence" value="ECO:0007669"/>
    <property type="project" value="UniProtKB-UniRule"/>
</dbReference>
<dbReference type="GO" id="GO:0006412">
    <property type="term" value="P:translation"/>
    <property type="evidence" value="ECO:0007669"/>
    <property type="project" value="UniProtKB-UniRule"/>
</dbReference>
<dbReference type="HAMAP" id="MF_03122">
    <property type="entry name" value="Ribosomal_eS1_euk"/>
    <property type="match status" value="1"/>
</dbReference>
<dbReference type="InterPro" id="IPR001593">
    <property type="entry name" value="Ribosomal_eS1"/>
</dbReference>
<dbReference type="InterPro" id="IPR027500">
    <property type="entry name" value="Ribosomal_eS1_euk"/>
</dbReference>
<dbReference type="PANTHER" id="PTHR11830">
    <property type="entry name" value="40S RIBOSOMAL PROTEIN S3A"/>
    <property type="match status" value="1"/>
</dbReference>
<dbReference type="Pfam" id="PF01015">
    <property type="entry name" value="Ribosomal_S3Ae"/>
    <property type="match status" value="1"/>
</dbReference>
<dbReference type="SMART" id="SM01397">
    <property type="entry name" value="Ribosomal_S3Ae"/>
    <property type="match status" value="1"/>
</dbReference>
<organism>
    <name type="scientific">Ixodes scapularis</name>
    <name type="common">Black-legged tick</name>
    <name type="synonym">Deer tick</name>
    <dbReference type="NCBI Taxonomy" id="6945"/>
    <lineage>
        <taxon>Eukaryota</taxon>
        <taxon>Metazoa</taxon>
        <taxon>Ecdysozoa</taxon>
        <taxon>Arthropoda</taxon>
        <taxon>Chelicerata</taxon>
        <taxon>Arachnida</taxon>
        <taxon>Acari</taxon>
        <taxon>Parasitiformes</taxon>
        <taxon>Ixodida</taxon>
        <taxon>Ixodoidea</taxon>
        <taxon>Ixodidae</taxon>
        <taxon>Ixodinae</taxon>
        <taxon>Ixodes</taxon>
    </lineage>
</organism>
<keyword id="KW-0963">Cytoplasm</keyword>
<keyword id="KW-1185">Reference proteome</keyword>
<keyword id="KW-0687">Ribonucleoprotein</keyword>
<keyword id="KW-0689">Ribosomal protein</keyword>
<name>RS3A_IXOSC</name>
<evidence type="ECO:0000255" key="1">
    <source>
        <dbReference type="HAMAP-Rule" id="MF_03122"/>
    </source>
</evidence>
<evidence type="ECO:0000256" key="2">
    <source>
        <dbReference type="SAM" id="MobiDB-lite"/>
    </source>
</evidence>
<evidence type="ECO:0000305" key="3"/>
<proteinExistence type="evidence at transcript level"/>
<sequence>MAVGKNKGLSKGGKKGVKKKIVDPFTRKDWYDVKAPTMYTVRNIGKTFVNRTQGTKIASEGLKGRVFEVSQADLTNGEDAYRKFRLIAEEVQGRNVLTNFHGMDLTTDKLRSMVKKWQTLIEATVDVRTTDGYLLRMFCIGFTKKCANQLKKTCYAQHNQVRLIRKKMTEMMVVEVSSSNLKDVVNKLIPGSIGKDIEKSCQHIYPLHDVLIRKVKVLKKPKFELGKLLELHGEGTSKGGAASTAAVAKGEEGVKVDRPEGYEPPVLETV</sequence>
<feature type="initiator methionine" description="Removed" evidence="1">
    <location>
        <position position="1"/>
    </location>
</feature>
<feature type="chain" id="PRO_0000389315" description="Small ribosomal subunit protein eS1">
    <location>
        <begin position="2"/>
        <end position="270"/>
    </location>
</feature>
<feature type="region of interest" description="Disordered" evidence="2">
    <location>
        <begin position="235"/>
        <end position="270"/>
    </location>
</feature>
<feature type="compositionally biased region" description="Low complexity" evidence="2">
    <location>
        <begin position="239"/>
        <end position="248"/>
    </location>
</feature>
<feature type="compositionally biased region" description="Basic and acidic residues" evidence="2">
    <location>
        <begin position="249"/>
        <end position="261"/>
    </location>
</feature>